<reference key="1">
    <citation type="journal article" date="2006" name="J. Bacteriol.">
        <title>Chromosome rearrangement and diversification of Francisella tularensis revealed by the type B (OSU18) genome sequence.</title>
        <authorList>
            <person name="Petrosino J.F."/>
            <person name="Xiang Q."/>
            <person name="Karpathy S.E."/>
            <person name="Jiang H."/>
            <person name="Yerrapragada S."/>
            <person name="Liu Y."/>
            <person name="Gioia J."/>
            <person name="Hemphill L."/>
            <person name="Gonzalez A."/>
            <person name="Raghavan T.M."/>
            <person name="Uzman A."/>
            <person name="Fox G.E."/>
            <person name="Highlander S."/>
            <person name="Reichard M."/>
            <person name="Morton R.J."/>
            <person name="Clinkenbeard K.D."/>
            <person name="Weinstock G.M."/>
        </authorList>
    </citation>
    <scope>NUCLEOTIDE SEQUENCE [LARGE SCALE GENOMIC DNA]</scope>
    <source>
        <strain>OSU18</strain>
    </source>
</reference>
<name>TRPB_FRATO</name>
<evidence type="ECO:0000255" key="1">
    <source>
        <dbReference type="HAMAP-Rule" id="MF_00133"/>
    </source>
</evidence>
<gene>
    <name evidence="1" type="primary">trpB</name>
    <name type="ordered locus">FTH_0093</name>
</gene>
<comment type="function">
    <text evidence="1">The beta subunit is responsible for the synthesis of L-tryptophan from indole and L-serine.</text>
</comment>
<comment type="catalytic activity">
    <reaction evidence="1">
        <text>(1S,2R)-1-C-(indol-3-yl)glycerol 3-phosphate + L-serine = D-glyceraldehyde 3-phosphate + L-tryptophan + H2O</text>
        <dbReference type="Rhea" id="RHEA:10532"/>
        <dbReference type="ChEBI" id="CHEBI:15377"/>
        <dbReference type="ChEBI" id="CHEBI:33384"/>
        <dbReference type="ChEBI" id="CHEBI:57912"/>
        <dbReference type="ChEBI" id="CHEBI:58866"/>
        <dbReference type="ChEBI" id="CHEBI:59776"/>
        <dbReference type="EC" id="4.2.1.20"/>
    </reaction>
</comment>
<comment type="cofactor">
    <cofactor evidence="1">
        <name>pyridoxal 5'-phosphate</name>
        <dbReference type="ChEBI" id="CHEBI:597326"/>
    </cofactor>
</comment>
<comment type="pathway">
    <text evidence="1">Amino-acid biosynthesis; L-tryptophan biosynthesis; L-tryptophan from chorismate: step 5/5.</text>
</comment>
<comment type="subunit">
    <text evidence="1">Tetramer of two alpha and two beta chains.</text>
</comment>
<comment type="similarity">
    <text evidence="1">Belongs to the TrpB family.</text>
</comment>
<sequence length="396" mass="43107">MSKLNAYFGEYGGQFVPQILVPALDQLEQEFIKAQADESFKQEFKELLQEYAGRPTALTKTRNIVKNTRTKLYLKREDLLHGGAHKTNQVLGQALLVKRMGKKEIIAETGAGQHGVATALACALLDLKCRVYMGAKDVERQSPNVFRMKLMGAEVIPVHSGSATLKDACNEALRDWSANYSKAHYLLGTAAGPHPFPTIVREFQRMIGEETKQQMLAKEGRLPDAVIACVGGGSNAIGMFADFIDEKNVKLIGVEPAGKGIETGEHGAPLKHGKTGIFFGMKAPLMQNSDGQIEESYSISAGLDFPSVGPQHAHLLAIGRAKYASATDDEALDAFKLLCKKEGIIPALESSHALAHALKLAYEDPNKEQLLVVNLSGRGDKDIFTVHDILKEKGEI</sequence>
<accession>Q0BP45</accession>
<organism>
    <name type="scientific">Francisella tularensis subsp. holarctica (strain OSU18)</name>
    <dbReference type="NCBI Taxonomy" id="393011"/>
    <lineage>
        <taxon>Bacteria</taxon>
        <taxon>Pseudomonadati</taxon>
        <taxon>Pseudomonadota</taxon>
        <taxon>Gammaproteobacteria</taxon>
        <taxon>Thiotrichales</taxon>
        <taxon>Francisellaceae</taxon>
        <taxon>Francisella</taxon>
    </lineage>
</organism>
<protein>
    <recommendedName>
        <fullName evidence="1">Tryptophan synthase beta chain</fullName>
        <ecNumber evidence="1">4.2.1.20</ecNumber>
    </recommendedName>
</protein>
<feature type="chain" id="PRO_1000018344" description="Tryptophan synthase beta chain">
    <location>
        <begin position="1"/>
        <end position="396"/>
    </location>
</feature>
<feature type="modified residue" description="N6-(pyridoxal phosphate)lysine" evidence="1">
    <location>
        <position position="86"/>
    </location>
</feature>
<keyword id="KW-0028">Amino-acid biosynthesis</keyword>
<keyword id="KW-0057">Aromatic amino acid biosynthesis</keyword>
<keyword id="KW-0456">Lyase</keyword>
<keyword id="KW-0663">Pyridoxal phosphate</keyword>
<keyword id="KW-0822">Tryptophan biosynthesis</keyword>
<dbReference type="EC" id="4.2.1.20" evidence="1"/>
<dbReference type="EMBL" id="CP000437">
    <property type="protein sequence ID" value="ABI82139.1"/>
    <property type="molecule type" value="Genomic_DNA"/>
</dbReference>
<dbReference type="RefSeq" id="WP_003014081.1">
    <property type="nucleotide sequence ID" value="NC_017463.1"/>
</dbReference>
<dbReference type="SMR" id="Q0BP45"/>
<dbReference type="KEGG" id="fth:FTH_0093"/>
<dbReference type="UniPathway" id="UPA00035">
    <property type="reaction ID" value="UER00044"/>
</dbReference>
<dbReference type="GO" id="GO:0005737">
    <property type="term" value="C:cytoplasm"/>
    <property type="evidence" value="ECO:0007669"/>
    <property type="project" value="TreeGrafter"/>
</dbReference>
<dbReference type="GO" id="GO:0004834">
    <property type="term" value="F:tryptophan synthase activity"/>
    <property type="evidence" value="ECO:0007669"/>
    <property type="project" value="UniProtKB-UniRule"/>
</dbReference>
<dbReference type="CDD" id="cd06446">
    <property type="entry name" value="Trp-synth_B"/>
    <property type="match status" value="1"/>
</dbReference>
<dbReference type="FunFam" id="3.40.50.1100:FF:000001">
    <property type="entry name" value="Tryptophan synthase beta chain"/>
    <property type="match status" value="1"/>
</dbReference>
<dbReference type="FunFam" id="3.40.50.1100:FF:000004">
    <property type="entry name" value="Tryptophan synthase beta chain"/>
    <property type="match status" value="1"/>
</dbReference>
<dbReference type="Gene3D" id="3.40.50.1100">
    <property type="match status" value="2"/>
</dbReference>
<dbReference type="HAMAP" id="MF_00133">
    <property type="entry name" value="Trp_synth_beta"/>
    <property type="match status" value="1"/>
</dbReference>
<dbReference type="InterPro" id="IPR006653">
    <property type="entry name" value="Trp_synth_b_CS"/>
</dbReference>
<dbReference type="InterPro" id="IPR006654">
    <property type="entry name" value="Trp_synth_beta"/>
</dbReference>
<dbReference type="InterPro" id="IPR023026">
    <property type="entry name" value="Trp_synth_beta/beta-like"/>
</dbReference>
<dbReference type="InterPro" id="IPR001926">
    <property type="entry name" value="TrpB-like_PALP"/>
</dbReference>
<dbReference type="InterPro" id="IPR036052">
    <property type="entry name" value="TrpB-like_PALP_sf"/>
</dbReference>
<dbReference type="NCBIfam" id="TIGR00263">
    <property type="entry name" value="trpB"/>
    <property type="match status" value="1"/>
</dbReference>
<dbReference type="PANTHER" id="PTHR48077:SF3">
    <property type="entry name" value="TRYPTOPHAN SYNTHASE"/>
    <property type="match status" value="1"/>
</dbReference>
<dbReference type="PANTHER" id="PTHR48077">
    <property type="entry name" value="TRYPTOPHAN SYNTHASE-RELATED"/>
    <property type="match status" value="1"/>
</dbReference>
<dbReference type="Pfam" id="PF00291">
    <property type="entry name" value="PALP"/>
    <property type="match status" value="1"/>
</dbReference>
<dbReference type="PIRSF" id="PIRSF001413">
    <property type="entry name" value="Trp_syn_beta"/>
    <property type="match status" value="1"/>
</dbReference>
<dbReference type="SUPFAM" id="SSF53686">
    <property type="entry name" value="Tryptophan synthase beta subunit-like PLP-dependent enzymes"/>
    <property type="match status" value="1"/>
</dbReference>
<dbReference type="PROSITE" id="PS00168">
    <property type="entry name" value="TRP_SYNTHASE_BETA"/>
    <property type="match status" value="1"/>
</dbReference>
<proteinExistence type="inferred from homology"/>